<gene>
    <name type="primary">MUC6</name>
</gene>
<sequence>MVQRWLLLSCCGALLSAGLANTSYTSPGLQRLKDSPQTAPDKGQCSTWGAGHFSTFDHHVYDFSGTCNYIFAATCKDAFPTFSVQLRRGPDGSISRIIVELGASVVTVSEAIISVKDIGVISLPYTSNGLQITPFGQSVRLVAKQLELELEVVWGPDSHLMVLVERKYMGQMCGLCGNFDGKVTNEFVSEEGKFLEPHKFAALQKLDDPGEICTFQDIPSTHVRQAQHARICTQLLTLVAPECSVSKEPFVLSCQADVAAAPQPGPQNSSCATLSEYSRQCSMVGQPVRRWRSPGLCSVGQCPANQVYQECGSACVKTCSNPQHSCSSSCTFGCFCPEGTVLNDLSNNHTCVPVTQCPCVLHGAMYAPGEVTIAACQTCRCTLGRWVCTERPCPGHCSLEGGSFVTTFDARPYRFHGTCTYILLQSPQLPEDGALMAVYDKSGVSHSETSLVAVVYLSRQDKIVISQDEVVTNNGEAKWLPYKTRNITVFRQTSTHLQMATSFGLELVVQLRPIFQAYVTVGPQFRGQTRGLCGNFNGDTTDDFTTSMGIAEGTASLFVDSWRAGNCPAALERETDPCSMSQLNKVCAETHCSMLLRTGTVFERCHATVNPAPFYKRCVYQACNYEETFPHICAALGDYVHACSLRGVLLWGWRSSVDNCTIPCTGNTTFSYNSQACERTCLSLSDRATECHHSAVPVDGCNCPDGTYLNQKGECVRKAQCPCILEGYKFILAEQSTVINGITCHCINGRLSCPQRPQMFLASCQAPKTFKSCSQSSENKFGAACAPTCQMLATGVACVPTKCEPGCVCAEGLYENADGQCVPPEECPCEFSGVSYPGGAELHTDCRTCSCSRGRWACQQGTHCPSTCTLYGEGHVITFDGQRFVFDGNCEYILATDVCGVNDSQPTFKILTENVICGNSGVTCSRAIKIFLGGLSVVLADRNYTVTGEEPHVQLGVTPGALSLVVDISIPGRYNLTLIWNRHMTILIRIARASQDPLCGLCGNFNGNMKDDFETRSRYVASSELELVNSWKESPLCGDVSFVTDPCSLNAFRRSWAERKCSVINSQTFATCHSKVYHLPYYEACVRDACGCDSGGDCECLCDAVAAYAQACLDKGVCVDWRTPAFCPIYCGFYNTHTQDGHGEYQYTQEANCTWHYQPCLCPSQPQSVPGSNIEGCYNCSQDEYFDHEEGVCVPCMPPTTPQPPTTPQLPTTGSRPTQVWPMTGTSTTIGLLSSTGPSPSSNHTPASPTQTPLLPATLTSSKPTASSGEPPRPTTAVTPQATSGLPPTATLRSTATKPTVTQATTRATASTASPATTSTAQSTTRTTMTLPTPATSGTSPTLPKSTNQELPGTTATQTTGPRPTPASTTGPTTPQPGQPTRPTATETTQTRTTTEYTTPQTPHTTHSPPTAGSPVPSTGPVTATSFHATTTYPTPSHPETTLPTHVPPFSTSLVTPSTHTVITPTHAQMATSASNHSAPTGTIPPPTTLKATGSTHTAPPITPTTSGTSQAHSSFSTNKTPTSLHSHTSSTHHPEVTPTSTTTITPNPTSTRTRTPVAHTNSATSSRPPPPFTTHSPPTGSSPFSSTGPMTATSFKTTTTYPTPSHPQTTLPTHVPPFSTSLVTPSTHTVITPTHAQMATSASIHSMPTGTIPPPTTLKATGSTHTAPTMTLTTSGTSQALSSLNTAKTSTSLHSHTSSTHHAEATSTSTTNITPNPTSTGTPPMTVTTSGTSQSRSSFSTAKTSTSLHSHTSSTHHPEVTSTSTTSITPNHTSTGTRTPVAHTTSATSSRLPTPFTTHSPPTGTTPISSTGPVTATSFQTTTTYPTPSHPHTTLPTHVPSFSTSLVTPSTHTVIIPTHTQMATSASIHSMPTGTIPPPTTIKATGSTHTAPPMTPTTSGTSQSPSSFSTAKTSTSLPYHTSSTHHPEVTPTSTTNITPKHTSTGTRTPVAHTTSASSSRLPTPFTTHSPPTGSSPFSSTGPMTATSFQTTTTYPTPSHPQTTLPTHVPPFSTSLVTPSTHTVIITTHTQMATSASIHSTPTGTVPPPTTLKATGSTHTAPPMTVTTSGTSQTHSSFSTATASSSFISSSSWLPQNSSSRPPSSPITTQLPHLSSATTPVSTTNQLSSSFSPSPSAPSTVSSYVPSSHSSPQTSSPSVGTSSSFVSAPVHSTTLSSGSHSSLSTHPTTASVSASPLFPSSPAASTTIRATLPHTISSPFTLSALLPISTVTVSPTPSSHLASSTIAFPSTPRTTASTHTAPAFSSQSTTSRSTSLTTRVPTSGFVSLTSGVTGIPTSPVTNLTTRHPGPTLSPTTRFLTSSLTAHGSTPASAPVSSLGTPTPTSPGVCSVREQQEEITFKGCMANVTVTRCEGACISAASFNIITQQVDARCSCCRPLHSYEQQLELPCPDPSTPGRRLVLTLQVFSHCVCSSVACGD</sequence>
<dbReference type="EMBL" id="AC139749">
    <property type="status" value="NOT_ANNOTATED_CDS"/>
    <property type="molecule type" value="Genomic_DNA"/>
</dbReference>
<dbReference type="EMBL" id="AY312160">
    <property type="protein sequence ID" value="AAQ82434.1"/>
    <property type="molecule type" value="mRNA"/>
</dbReference>
<dbReference type="EMBL" id="AY458429">
    <property type="protein sequence ID" value="AAS13634.1"/>
    <property type="molecule type" value="mRNA"/>
</dbReference>
<dbReference type="EMBL" id="AY500284">
    <property type="protein sequence ID" value="AAS76674.1"/>
    <property type="molecule type" value="Genomic_DNA"/>
</dbReference>
<dbReference type="EMBL" id="L07517">
    <property type="protein sequence ID" value="AAA35866.2"/>
    <property type="molecule type" value="mRNA"/>
</dbReference>
<dbReference type="EMBL" id="AK092533">
    <property type="status" value="NOT_ANNOTATED_CDS"/>
    <property type="molecule type" value="mRNA"/>
</dbReference>
<dbReference type="EMBL" id="AK096772">
    <property type="protein sequence ID" value="BAC04860.1"/>
    <property type="status" value="ALT_INIT"/>
    <property type="molecule type" value="mRNA"/>
</dbReference>
<dbReference type="EMBL" id="U97698">
    <property type="protein sequence ID" value="AAC51370.1"/>
    <property type="molecule type" value="mRNA"/>
</dbReference>
<dbReference type="CCDS" id="CCDS44513.1"/>
<dbReference type="PIR" id="A46629">
    <property type="entry name" value="A46629"/>
</dbReference>
<dbReference type="RefSeq" id="NP_005952.2">
    <property type="nucleotide sequence ID" value="NM_005961.2"/>
</dbReference>
<dbReference type="SMR" id="Q6W4X9"/>
<dbReference type="BioGRID" id="110675">
    <property type="interactions" value="4"/>
</dbReference>
<dbReference type="FunCoup" id="Q6W4X9">
    <property type="interactions" value="35"/>
</dbReference>
<dbReference type="STRING" id="9606.ENSP00000406861"/>
<dbReference type="MEROPS" id="I08.952"/>
<dbReference type="MEROPS" id="I08.955"/>
<dbReference type="GlyConnect" id="1521">
    <property type="glycosylation" value="5 N-Linked glycans (3 sites)"/>
</dbReference>
<dbReference type="GlyCosmos" id="Q6W4X9">
    <property type="glycosylation" value="8 sites, 7 glycans"/>
</dbReference>
<dbReference type="GlyGen" id="Q6W4X9">
    <property type="glycosylation" value="23 sites, 10 N-linked glycans (7 sites)"/>
</dbReference>
<dbReference type="iPTMnet" id="Q6W4X9"/>
<dbReference type="PhosphoSitePlus" id="Q6W4X9"/>
<dbReference type="BioMuta" id="MUC6"/>
<dbReference type="DMDM" id="332278200"/>
<dbReference type="jPOST" id="Q6W4X9"/>
<dbReference type="MassIVE" id="Q6W4X9"/>
<dbReference type="PaxDb" id="9606-ENSP00000406861"/>
<dbReference type="PeptideAtlas" id="Q6W4X9"/>
<dbReference type="ProteomicsDB" id="67744"/>
<dbReference type="Antibodypedia" id="22789">
    <property type="antibodies" value="381 antibodies from 23 providers"/>
</dbReference>
<dbReference type="DNASU" id="4588"/>
<dbReference type="Ensembl" id="ENST00000421673.7">
    <property type="protein sequence ID" value="ENSP00000406861.2"/>
    <property type="gene ID" value="ENSG00000184956.16"/>
</dbReference>
<dbReference type="GeneID" id="4588"/>
<dbReference type="KEGG" id="hsa:4588"/>
<dbReference type="MANE-Select" id="ENST00000421673.7">
    <property type="protein sequence ID" value="ENSP00000406861.2"/>
    <property type="RefSeq nucleotide sequence ID" value="NM_005961.3"/>
    <property type="RefSeq protein sequence ID" value="NP_005952.2"/>
</dbReference>
<dbReference type="UCSC" id="uc001lsw.3">
    <property type="organism name" value="human"/>
</dbReference>
<dbReference type="AGR" id="HGNC:7517"/>
<dbReference type="CTD" id="4588"/>
<dbReference type="DisGeNET" id="4588"/>
<dbReference type="GeneCards" id="MUC6"/>
<dbReference type="HGNC" id="HGNC:7517">
    <property type="gene designation" value="MUC6"/>
</dbReference>
<dbReference type="HPA" id="ENSG00000184956">
    <property type="expression patterns" value="Group enriched (pancreas, stomach)"/>
</dbReference>
<dbReference type="MalaCards" id="MUC6"/>
<dbReference type="MIM" id="158374">
    <property type="type" value="gene"/>
</dbReference>
<dbReference type="neXtProt" id="NX_Q6W4X9"/>
<dbReference type="OpenTargets" id="ENSG00000184956"/>
<dbReference type="VEuPathDB" id="HostDB:ENSG00000184956"/>
<dbReference type="eggNOG" id="KOG1216">
    <property type="taxonomic scope" value="Eukaryota"/>
</dbReference>
<dbReference type="GeneTree" id="ENSGT00940000161708"/>
<dbReference type="HOGENOM" id="CLU_000076_1_0_1"/>
<dbReference type="InParanoid" id="Q6W4X9"/>
<dbReference type="OMA" id="GVCVPCM"/>
<dbReference type="OrthoDB" id="160294at2759"/>
<dbReference type="PAN-GO" id="Q6W4X9">
    <property type="GO annotations" value="2 GO annotations based on evolutionary models"/>
</dbReference>
<dbReference type="PhylomeDB" id="Q6W4X9"/>
<dbReference type="TreeFam" id="TF300299"/>
<dbReference type="PathwayCommons" id="Q6W4X9"/>
<dbReference type="Reactome" id="R-HSA-5083625">
    <property type="pathway name" value="Defective GALNT3 causes HFTC"/>
</dbReference>
<dbReference type="Reactome" id="R-HSA-5083632">
    <property type="pathway name" value="Defective C1GALT1C1 causes TNPS"/>
</dbReference>
<dbReference type="Reactome" id="R-HSA-5083636">
    <property type="pathway name" value="Defective GALNT12 causes CRCS1"/>
</dbReference>
<dbReference type="Reactome" id="R-HSA-5621480">
    <property type="pathway name" value="Dectin-2 family"/>
</dbReference>
<dbReference type="Reactome" id="R-HSA-913709">
    <property type="pathway name" value="O-linked glycosylation of mucins"/>
</dbReference>
<dbReference type="Reactome" id="R-HSA-977068">
    <property type="pathway name" value="Termination of O-glycan biosynthesis"/>
</dbReference>
<dbReference type="SignaLink" id="Q6W4X9"/>
<dbReference type="BioGRID-ORCS" id="4588">
    <property type="hits" value="21 hits in 1138 CRISPR screens"/>
</dbReference>
<dbReference type="GeneWiki" id="MUC6"/>
<dbReference type="GenomeRNAi" id="4588"/>
<dbReference type="Pharos" id="Q6W4X9">
    <property type="development level" value="Tbio"/>
</dbReference>
<dbReference type="PRO" id="PR:Q6W4X9"/>
<dbReference type="Proteomes" id="UP000005640">
    <property type="component" value="Chromosome 11"/>
</dbReference>
<dbReference type="RNAct" id="Q6W4X9">
    <property type="molecule type" value="protein"/>
</dbReference>
<dbReference type="Bgee" id="ENSG00000184956">
    <property type="expression patterns" value="Expressed in body of pancreas and 93 other cell types or tissues"/>
</dbReference>
<dbReference type="ExpressionAtlas" id="Q6W4X9">
    <property type="expression patterns" value="baseline and differential"/>
</dbReference>
<dbReference type="GO" id="GO:0031012">
    <property type="term" value="C:extracellular matrix"/>
    <property type="evidence" value="ECO:0000318"/>
    <property type="project" value="GO_Central"/>
</dbReference>
<dbReference type="GO" id="GO:0005615">
    <property type="term" value="C:extracellular space"/>
    <property type="evidence" value="ECO:0000318"/>
    <property type="project" value="GO_Central"/>
</dbReference>
<dbReference type="GO" id="GO:0005796">
    <property type="term" value="C:Golgi lumen"/>
    <property type="evidence" value="ECO:0000304"/>
    <property type="project" value="Reactome"/>
</dbReference>
<dbReference type="GO" id="GO:0005886">
    <property type="term" value="C:plasma membrane"/>
    <property type="evidence" value="ECO:0000304"/>
    <property type="project" value="Reactome"/>
</dbReference>
<dbReference type="GO" id="GO:0005201">
    <property type="term" value="F:extracellular matrix structural constituent"/>
    <property type="evidence" value="ECO:0000303"/>
    <property type="project" value="UniProtKB"/>
</dbReference>
<dbReference type="GO" id="GO:0030277">
    <property type="term" value="P:maintenance of gastrointestinal epithelium"/>
    <property type="evidence" value="ECO:0000303"/>
    <property type="project" value="UniProtKB"/>
</dbReference>
<dbReference type="CDD" id="cd19941">
    <property type="entry name" value="TIL"/>
    <property type="match status" value="3"/>
</dbReference>
<dbReference type="FunFam" id="2.10.25.10:FF:000153">
    <property type="entry name" value="MUC5B isoform 1"/>
    <property type="match status" value="2"/>
</dbReference>
<dbReference type="FunFam" id="2.10.25.10:FF:000414">
    <property type="entry name" value="von Willebrand factor"/>
    <property type="match status" value="1"/>
</dbReference>
<dbReference type="Gene3D" id="2.10.25.10">
    <property type="entry name" value="Laminin"/>
    <property type="match status" value="3"/>
</dbReference>
<dbReference type="InterPro" id="IPR006207">
    <property type="entry name" value="Cys_knot_C"/>
</dbReference>
<dbReference type="InterPro" id="IPR050780">
    <property type="entry name" value="Mucin_vWF_Thrombospondin_sf"/>
</dbReference>
<dbReference type="InterPro" id="IPR036084">
    <property type="entry name" value="Ser_inhib-like_sf"/>
</dbReference>
<dbReference type="InterPro" id="IPR002919">
    <property type="entry name" value="TIL_dom"/>
</dbReference>
<dbReference type="InterPro" id="IPR014853">
    <property type="entry name" value="VWF/SSPO/ZAN-like_Cys-rich_dom"/>
</dbReference>
<dbReference type="InterPro" id="IPR001007">
    <property type="entry name" value="VWF_dom"/>
</dbReference>
<dbReference type="InterPro" id="IPR001846">
    <property type="entry name" value="VWF_type-D"/>
</dbReference>
<dbReference type="PANTHER" id="PTHR11339">
    <property type="entry name" value="EXTRACELLULAR MATRIX GLYCOPROTEIN RELATED"/>
    <property type="match status" value="1"/>
</dbReference>
<dbReference type="PANTHER" id="PTHR11339:SF264">
    <property type="entry name" value="MUCIN-6"/>
    <property type="match status" value="1"/>
</dbReference>
<dbReference type="Pfam" id="PF08742">
    <property type="entry name" value="C8"/>
    <property type="match status" value="3"/>
</dbReference>
<dbReference type="Pfam" id="PF01826">
    <property type="entry name" value="TIL"/>
    <property type="match status" value="3"/>
</dbReference>
<dbReference type="Pfam" id="PF00094">
    <property type="entry name" value="VWD"/>
    <property type="match status" value="3"/>
</dbReference>
<dbReference type="SMART" id="SM00832">
    <property type="entry name" value="C8"/>
    <property type="match status" value="3"/>
</dbReference>
<dbReference type="SMART" id="SM00041">
    <property type="entry name" value="CT"/>
    <property type="match status" value="1"/>
</dbReference>
<dbReference type="SMART" id="SM00215">
    <property type="entry name" value="VWC_out"/>
    <property type="match status" value="2"/>
</dbReference>
<dbReference type="SMART" id="SM00216">
    <property type="entry name" value="VWD"/>
    <property type="match status" value="3"/>
</dbReference>
<dbReference type="SUPFAM" id="SSF57567">
    <property type="entry name" value="Serine protease inhibitors"/>
    <property type="match status" value="3"/>
</dbReference>
<dbReference type="PROSITE" id="PS01225">
    <property type="entry name" value="CTCK_2"/>
    <property type="match status" value="1"/>
</dbReference>
<dbReference type="PROSITE" id="PS51233">
    <property type="entry name" value="VWFD"/>
    <property type="match status" value="3"/>
</dbReference>
<accession>Q6W4X9</accession>
<accession>O15329</accession>
<accession>Q14394</accession>
<accession>Q2TUQ5</accession>
<accession>Q4L207</accession>
<accession>Q8N8I1</accession>
<accession>Q8NAK1</accession>
<organism>
    <name type="scientific">Homo sapiens</name>
    <name type="common">Human</name>
    <dbReference type="NCBI Taxonomy" id="9606"/>
    <lineage>
        <taxon>Eukaryota</taxon>
        <taxon>Metazoa</taxon>
        <taxon>Chordata</taxon>
        <taxon>Craniata</taxon>
        <taxon>Vertebrata</taxon>
        <taxon>Euteleostomi</taxon>
        <taxon>Mammalia</taxon>
        <taxon>Eutheria</taxon>
        <taxon>Euarchontoglires</taxon>
        <taxon>Primates</taxon>
        <taxon>Haplorrhini</taxon>
        <taxon>Catarrhini</taxon>
        <taxon>Hominidae</taxon>
        <taxon>Homo</taxon>
    </lineage>
</organism>
<protein>
    <recommendedName>
        <fullName>Mucin-6</fullName>
        <shortName>MUC-6</shortName>
    </recommendedName>
    <alternativeName>
        <fullName>Gastric mucin-6</fullName>
    </alternativeName>
</protein>
<reference key="1">
    <citation type="journal article" date="2006" name="Nature">
        <title>Human chromosome 11 DNA sequence and analysis including novel gene identification.</title>
        <authorList>
            <person name="Taylor T.D."/>
            <person name="Noguchi H."/>
            <person name="Totoki Y."/>
            <person name="Toyoda A."/>
            <person name="Kuroki Y."/>
            <person name="Dewar K."/>
            <person name="Lloyd C."/>
            <person name="Itoh T."/>
            <person name="Takeda T."/>
            <person name="Kim D.-W."/>
            <person name="She X."/>
            <person name="Barlow K.F."/>
            <person name="Bloom T."/>
            <person name="Bruford E."/>
            <person name="Chang J.L."/>
            <person name="Cuomo C.A."/>
            <person name="Eichler E."/>
            <person name="FitzGerald M.G."/>
            <person name="Jaffe D.B."/>
            <person name="LaButti K."/>
            <person name="Nicol R."/>
            <person name="Park H.-S."/>
            <person name="Seaman C."/>
            <person name="Sougnez C."/>
            <person name="Yang X."/>
            <person name="Zimmer A.R."/>
            <person name="Zody M.C."/>
            <person name="Birren B.W."/>
            <person name="Nusbaum C."/>
            <person name="Fujiyama A."/>
            <person name="Hattori M."/>
            <person name="Rogers J."/>
            <person name="Lander E.S."/>
            <person name="Sakaki Y."/>
        </authorList>
    </citation>
    <scope>NUCLEOTIDE SEQUENCE [LARGE SCALE GENOMIC DNA]</scope>
</reference>
<reference key="2">
    <citation type="journal article" date="2004" name="Genomics">
        <title>The complete genomic organization of the human MUC6 and MUC2 mucin genes.</title>
        <authorList>
            <person name="Rousseau K."/>
            <person name="Byrne C."/>
            <person name="Kim Y.S."/>
            <person name="Gum J.R. Jr."/>
            <person name="Swallow D.M."/>
            <person name="Toribara N.W."/>
        </authorList>
    </citation>
    <scope>NUCLEOTIDE SEQUENCE [MRNA] OF 1-1570</scope>
</reference>
<reference key="3">
    <citation type="submission" date="2003-11" db="EMBL/GenBank/DDBJ databases">
        <title>Muc6 mucin exon1-exon3.</title>
        <authorList>
            <person name="van Seuningen I."/>
        </authorList>
    </citation>
    <scope>NUCLEOTIDE SEQUENCE [MRNA] OF 1-119</scope>
</reference>
<reference key="4">
    <citation type="submission" date="2003-12" db="EMBL/GenBank/DDBJ databases">
        <title>Promotor characterization of the human MUC6.</title>
        <authorList>
            <person name="van Seuningen I."/>
            <person name="Desseyn J.-L."/>
        </authorList>
    </citation>
    <scope>NUCLEOTIDE SEQUENCE [GENOMIC DNA] OF 10-116</scope>
</reference>
<reference key="5">
    <citation type="journal article" date="1993" name="J. Biol. Chem.">
        <title>Human gastric mucin. Identification of a unique species by expression cloning.</title>
        <authorList>
            <person name="Toribara N.W."/>
            <person name="Roberton A.M."/>
            <person name="Ho S.B."/>
            <person name="Kuo W.-L."/>
            <person name="Gum E."/>
            <person name="Hicks J.W."/>
            <person name="Gum J.R. Jr."/>
            <person name="Byrd J.C."/>
            <person name="Siddiki B."/>
            <person name="Kim Y.S."/>
        </authorList>
    </citation>
    <scope>NUCLEOTIDE SEQUENCE [MRNA] OF 1785-1998</scope>
    <scope>VARIANT THR-1794</scope>
    <source>
        <tissue>Stomach</tissue>
    </source>
</reference>
<reference key="6">
    <citation type="submission" date="2007-09" db="EMBL/GenBank/DDBJ databases">
        <authorList>
            <person name="Toribara N.W."/>
            <person name="Roberton A.M."/>
            <person name="Ho S.B."/>
            <person name="Kuo W.-L."/>
            <person name="Gum E."/>
            <person name="Hicks J.W."/>
            <person name="Gum J.R. Jr."/>
            <person name="Byrd J.C."/>
            <person name="Siddiki B."/>
            <person name="Kim Y.S."/>
        </authorList>
    </citation>
    <scope>SEQUENCE REVISION TO 1954-1998</scope>
</reference>
<reference key="7">
    <citation type="journal article" date="2004" name="Nat. Genet.">
        <title>Complete sequencing and characterization of 21,243 full-length human cDNAs.</title>
        <authorList>
            <person name="Ota T."/>
            <person name="Suzuki Y."/>
            <person name="Nishikawa T."/>
            <person name="Otsuki T."/>
            <person name="Sugiyama T."/>
            <person name="Irie R."/>
            <person name="Wakamatsu A."/>
            <person name="Hayashi K."/>
            <person name="Sato H."/>
            <person name="Nagai K."/>
            <person name="Kimura K."/>
            <person name="Makita H."/>
            <person name="Sekine M."/>
            <person name="Obayashi M."/>
            <person name="Nishi T."/>
            <person name="Shibahara T."/>
            <person name="Tanaka T."/>
            <person name="Ishii S."/>
            <person name="Yamamoto J."/>
            <person name="Saito K."/>
            <person name="Kawai Y."/>
            <person name="Isono Y."/>
            <person name="Nakamura Y."/>
            <person name="Nagahari K."/>
            <person name="Murakami K."/>
            <person name="Yasuda T."/>
            <person name="Iwayanagi T."/>
            <person name="Wagatsuma M."/>
            <person name="Shiratori A."/>
            <person name="Sudo H."/>
            <person name="Hosoiri T."/>
            <person name="Kaku Y."/>
            <person name="Kodaira H."/>
            <person name="Kondo H."/>
            <person name="Sugawara M."/>
            <person name="Takahashi M."/>
            <person name="Kanda K."/>
            <person name="Yokoi T."/>
            <person name="Furuya T."/>
            <person name="Kikkawa E."/>
            <person name="Omura Y."/>
            <person name="Abe K."/>
            <person name="Kamihara K."/>
            <person name="Katsuta N."/>
            <person name="Sato K."/>
            <person name="Tanikawa M."/>
            <person name="Yamazaki M."/>
            <person name="Ninomiya K."/>
            <person name="Ishibashi T."/>
            <person name="Yamashita H."/>
            <person name="Murakawa K."/>
            <person name="Fujimori K."/>
            <person name="Tanai H."/>
            <person name="Kimata M."/>
            <person name="Watanabe M."/>
            <person name="Hiraoka S."/>
            <person name="Chiba Y."/>
            <person name="Ishida S."/>
            <person name="Ono Y."/>
            <person name="Takiguchi S."/>
            <person name="Watanabe S."/>
            <person name="Yosida M."/>
            <person name="Hotuta T."/>
            <person name="Kusano J."/>
            <person name="Kanehori K."/>
            <person name="Takahashi-Fujii A."/>
            <person name="Hara H."/>
            <person name="Tanase T.-O."/>
            <person name="Nomura Y."/>
            <person name="Togiya S."/>
            <person name="Komai F."/>
            <person name="Hara R."/>
            <person name="Takeuchi K."/>
            <person name="Arita M."/>
            <person name="Imose N."/>
            <person name="Musashino K."/>
            <person name="Yuuki H."/>
            <person name="Oshima A."/>
            <person name="Sasaki N."/>
            <person name="Aotsuka S."/>
            <person name="Yoshikawa Y."/>
            <person name="Matsunawa H."/>
            <person name="Ichihara T."/>
            <person name="Shiohata N."/>
            <person name="Sano S."/>
            <person name="Moriya S."/>
            <person name="Momiyama H."/>
            <person name="Satoh N."/>
            <person name="Takami S."/>
            <person name="Terashima Y."/>
            <person name="Suzuki O."/>
            <person name="Nakagawa S."/>
            <person name="Senoh A."/>
            <person name="Mizoguchi H."/>
            <person name="Goto Y."/>
            <person name="Shimizu F."/>
            <person name="Wakebe H."/>
            <person name="Hishigaki H."/>
            <person name="Watanabe T."/>
            <person name="Sugiyama A."/>
            <person name="Takemoto M."/>
            <person name="Kawakami B."/>
            <person name="Yamazaki M."/>
            <person name="Watanabe K."/>
            <person name="Kumagai A."/>
            <person name="Itakura S."/>
            <person name="Fukuzumi Y."/>
            <person name="Fujimori Y."/>
            <person name="Komiyama M."/>
            <person name="Tashiro H."/>
            <person name="Tanigami A."/>
            <person name="Fujiwara T."/>
            <person name="Ono T."/>
            <person name="Yamada K."/>
            <person name="Fujii Y."/>
            <person name="Ozaki K."/>
            <person name="Hirao M."/>
            <person name="Ohmori Y."/>
            <person name="Kawabata A."/>
            <person name="Hikiji T."/>
            <person name="Kobatake N."/>
            <person name="Inagaki H."/>
            <person name="Ikema Y."/>
            <person name="Okamoto S."/>
            <person name="Okitani R."/>
            <person name="Kawakami T."/>
            <person name="Noguchi S."/>
            <person name="Itoh T."/>
            <person name="Shigeta K."/>
            <person name="Senba T."/>
            <person name="Matsumura K."/>
            <person name="Nakajima Y."/>
            <person name="Mizuno T."/>
            <person name="Morinaga M."/>
            <person name="Sasaki M."/>
            <person name="Togashi T."/>
            <person name="Oyama M."/>
            <person name="Hata H."/>
            <person name="Watanabe M."/>
            <person name="Komatsu T."/>
            <person name="Mizushima-Sugano J."/>
            <person name="Satoh T."/>
            <person name="Shirai Y."/>
            <person name="Takahashi Y."/>
            <person name="Nakagawa K."/>
            <person name="Okumura K."/>
            <person name="Nagase T."/>
            <person name="Nomura N."/>
            <person name="Kikuchi H."/>
            <person name="Masuho Y."/>
            <person name="Yamashita R."/>
            <person name="Nakai K."/>
            <person name="Yada T."/>
            <person name="Nakamura Y."/>
            <person name="Ohara O."/>
            <person name="Isogai T."/>
            <person name="Sugano S."/>
        </authorList>
    </citation>
    <scope>NUCLEOTIDE SEQUENCE [LARGE SCALE MRNA] OF 1843-2439</scope>
    <source>
        <tissue>Prostate</tissue>
    </source>
</reference>
<reference key="8">
    <citation type="journal article" date="1997" name="J. Biol. Chem.">
        <title>The carboxyl-terminal sequence of the human secretory mucin, MUC6. Analysis of the primary amino acid sequence.</title>
        <authorList>
            <person name="Toribara N.W."/>
            <person name="Ho S.B."/>
            <person name="Gum E."/>
            <person name="Gum J.R. Jr."/>
            <person name="Lau P."/>
            <person name="Kim Y.S."/>
        </authorList>
    </citation>
    <scope>NUCLEOTIDE SEQUENCE [MRNA] OF 2022-2439</scope>
    <scope>SUBUNIT</scope>
</reference>
<reference key="9">
    <citation type="journal article" date="1998" name="J. Biol. Chem.">
        <title>Human mucin genes MUC2, MUC3, MUC4, MUC5AC, MUC5B, and MUC6 express stable and extremely large mRNAs and exhibit a variable length polymorphism. An improved method to analyze large mRNAs.</title>
        <authorList>
            <person name="Debailleul V."/>
            <person name="Laine A."/>
            <person name="Huet G."/>
            <person name="Mathon P."/>
            <person name="d'Hooghe M.C."/>
            <person name="Aubert J.-P."/>
            <person name="Porchet N."/>
        </authorList>
    </citation>
    <scope>TISSUE SPECIFICITY</scope>
    <scope>POLYMORPHISM</scope>
</reference>
<reference key="10">
    <citation type="journal article" date="1998" name="J. Pathol.">
        <title>The MUC6 secretory mucin gene is expressed in a wide variety of epithelial tissues.</title>
        <authorList>
            <person name="Bartman A.E."/>
            <person name="Buisine M.-P."/>
            <person name="Aubert J.-P."/>
            <person name="Niehans G.A."/>
            <person name="Toribara N.W."/>
            <person name="Kim Y.S."/>
            <person name="Kelly E.J."/>
            <person name="Crabtree J.E."/>
            <person name="Ho S.B."/>
        </authorList>
    </citation>
    <scope>TISSUE SPECIFICITY</scope>
    <scope>FUNCTION</scope>
    <scope>DEVELOPMENTAL STAGE</scope>
</reference>
<reference key="11">
    <citation type="journal article" date="1999" name="J. Histochem. Cytochem.">
        <title>Expression of the MUC 6 mucin gene in development of the human kidney and male genital ducts.</title>
        <authorList>
            <person name="Reid C.J."/>
            <person name="Harris A."/>
        </authorList>
    </citation>
    <scope>FUNCTION</scope>
    <scope>TISSUE SPECIFICITY</scope>
    <scope>DEVELOPMENTAL STAGE</scope>
</reference>
<reference key="12">
    <citation type="journal article" date="2002" name="Biochem. J.">
        <title>Gastric MUC5AC and MUC6 are large oligomeric mucins that differ in size, glycosylation and tissue distribution.</title>
        <authorList>
            <person name="Nordman H."/>
            <person name="Davies J.R."/>
            <person name="Lindell G."/>
            <person name="de Bolos C."/>
            <person name="Real F."/>
            <person name="Carlstedt I."/>
        </authorList>
    </citation>
    <scope>FUNCTION</scope>
    <scope>TISSUE SPECIFICITY</scope>
    <scope>GLYCOSYLATION</scope>
</reference>
<reference key="13">
    <citation type="journal article" date="2004" name="J. Clin. Pathol.">
        <title>Aberrant epithelial expression of trefoil family factor 2 and mucin 6 in Helicobacter pylori infected gastric antrum, incisura, and body and its association with antralisation.</title>
        <authorList>
            <person name="Xia H.H.-X."/>
            <person name="Yang Y."/>
            <person name="Lam S.K."/>
            <person name="Wong W.M."/>
            <person name="Leung S.Y."/>
            <person name="Yuen S.T."/>
            <person name="Elia G."/>
            <person name="Wright N.A."/>
            <person name="Wong B.C.-Y."/>
        </authorList>
    </citation>
    <scope>TISSUE SPECIFICITY</scope>
</reference>
<reference key="14">
    <citation type="journal article" date="2005" name="Biochem. Biophys. Res. Commun.">
        <title>Upregulation of MUC6 mucin gene expression by NFkappaB and Sp factors.</title>
        <authorList>
            <person name="Sakai H."/>
            <person name="Jinawath A."/>
            <person name="Yamaoka S."/>
            <person name="Yuasa Y."/>
        </authorList>
    </citation>
    <scope>INDUCTION</scope>
</reference>
<evidence type="ECO:0000250" key="1"/>
<evidence type="ECO:0000255" key="2"/>
<evidence type="ECO:0000255" key="3">
    <source>
        <dbReference type="PROSITE-ProRule" id="PRU00039"/>
    </source>
</evidence>
<evidence type="ECO:0000255" key="4">
    <source>
        <dbReference type="PROSITE-ProRule" id="PRU00580"/>
    </source>
</evidence>
<evidence type="ECO:0000256" key="5">
    <source>
        <dbReference type="SAM" id="MobiDB-lite"/>
    </source>
</evidence>
<evidence type="ECO:0000269" key="6">
    <source>
    </source>
</evidence>
<evidence type="ECO:0000269" key="7">
    <source>
    </source>
</evidence>
<evidence type="ECO:0000269" key="8">
    <source>
    </source>
</evidence>
<evidence type="ECO:0000269" key="9">
    <source>
    </source>
</evidence>
<evidence type="ECO:0000269" key="10">
    <source>
    </source>
</evidence>
<evidence type="ECO:0000269" key="11">
    <source>
    </source>
</evidence>
<evidence type="ECO:0000269" key="12">
    <source>
    </source>
</evidence>
<evidence type="ECO:0000269" key="13">
    <source>
    </source>
</evidence>
<evidence type="ECO:0000305" key="14"/>
<name>MUC6_HUMAN</name>
<feature type="signal peptide" evidence="2">
    <location>
        <begin position="1"/>
        <end position="22"/>
    </location>
</feature>
<feature type="chain" id="PRO_0000259496" description="Mucin-6">
    <location>
        <begin position="23"/>
        <end position="2439"/>
    </location>
</feature>
<feature type="domain" description="VWFD 1" evidence="4">
    <location>
        <begin position="43"/>
        <end position="214"/>
    </location>
</feature>
<feature type="domain" description="TIL">
    <location>
        <begin position="302"/>
        <end position="357"/>
    </location>
</feature>
<feature type="domain" description="VWFD 2" evidence="4">
    <location>
        <begin position="395"/>
        <end position="579"/>
    </location>
</feature>
<feature type="domain" description="VWFD 3" evidence="4">
    <location>
        <begin position="866"/>
        <end position="1038"/>
    </location>
</feature>
<feature type="repeat" description="1; truncated">
    <location>
        <begin position="1561"/>
        <end position="1738"/>
    </location>
</feature>
<feature type="repeat" description="2">
    <location>
        <begin position="1785"/>
        <end position="1953"/>
    </location>
</feature>
<feature type="domain" description="CTCK" evidence="3">
    <location>
        <begin position="2349"/>
        <end position="2438"/>
    </location>
</feature>
<feature type="region of interest" description="Disordered" evidence="5">
    <location>
        <begin position="1202"/>
        <end position="1455"/>
    </location>
</feature>
<feature type="region of interest" description="Disordered" evidence="5">
    <location>
        <begin position="1471"/>
        <end position="1626"/>
    </location>
</feature>
<feature type="region of interest" description="Approximate repeats">
    <location>
        <begin position="1607"/>
        <end position="1953"/>
    </location>
</feature>
<feature type="region of interest" description="Disordered" evidence="5">
    <location>
        <begin position="1642"/>
        <end position="1834"/>
    </location>
</feature>
<feature type="region of interest" description="Disordered" evidence="5">
    <location>
        <begin position="1868"/>
        <end position="1983"/>
    </location>
</feature>
<feature type="region of interest" description="Disordered" evidence="5">
    <location>
        <begin position="2033"/>
        <end position="2077"/>
    </location>
</feature>
<feature type="region of interest" description="Disordered" evidence="5">
    <location>
        <begin position="2090"/>
        <end position="2196"/>
    </location>
</feature>
<feature type="region of interest" description="Disordered" evidence="5">
    <location>
        <begin position="2233"/>
        <end position="2278"/>
    </location>
</feature>
<feature type="region of interest" description="Disordered" evidence="5">
    <location>
        <begin position="2323"/>
        <end position="2348"/>
    </location>
</feature>
<feature type="compositionally biased region" description="Low complexity" evidence="5">
    <location>
        <begin position="1224"/>
        <end position="1265"/>
    </location>
</feature>
<feature type="compositionally biased region" description="Polar residues" evidence="5">
    <location>
        <begin position="1276"/>
        <end position="1286"/>
    </location>
</feature>
<feature type="compositionally biased region" description="Low complexity" evidence="5">
    <location>
        <begin position="1294"/>
        <end position="1339"/>
    </location>
</feature>
<feature type="compositionally biased region" description="Polar residues" evidence="5">
    <location>
        <begin position="1340"/>
        <end position="1351"/>
    </location>
</feature>
<feature type="compositionally biased region" description="Low complexity" evidence="5">
    <location>
        <begin position="1352"/>
        <end position="1373"/>
    </location>
</feature>
<feature type="compositionally biased region" description="Low complexity" evidence="5">
    <location>
        <begin position="1381"/>
        <end position="1415"/>
    </location>
</feature>
<feature type="compositionally biased region" description="Polar residues" evidence="5">
    <location>
        <begin position="1416"/>
        <end position="1455"/>
    </location>
</feature>
<feature type="compositionally biased region" description="Polar residues" evidence="5">
    <location>
        <begin position="1471"/>
        <end position="1481"/>
    </location>
</feature>
<feature type="compositionally biased region" description="Polar residues" evidence="5">
    <location>
        <begin position="1490"/>
        <end position="1520"/>
    </location>
</feature>
<feature type="compositionally biased region" description="Low complexity" evidence="5">
    <location>
        <begin position="1521"/>
        <end position="1567"/>
    </location>
</feature>
<feature type="compositionally biased region" description="Low complexity" evidence="5">
    <location>
        <begin position="1574"/>
        <end position="1611"/>
    </location>
</feature>
<feature type="compositionally biased region" description="Polar residues" evidence="5">
    <location>
        <begin position="1659"/>
        <end position="1686"/>
    </location>
</feature>
<feature type="compositionally biased region" description="Low complexity" evidence="5">
    <location>
        <begin position="1687"/>
        <end position="1768"/>
    </location>
</feature>
<feature type="compositionally biased region" description="Polar residues" evidence="5">
    <location>
        <begin position="1769"/>
        <end position="1793"/>
    </location>
</feature>
<feature type="compositionally biased region" description="Low complexity" evidence="5">
    <location>
        <begin position="1794"/>
        <end position="1834"/>
    </location>
</feature>
<feature type="compositionally biased region" description="Low complexity" evidence="5">
    <location>
        <begin position="1891"/>
        <end position="1917"/>
    </location>
</feature>
<feature type="compositionally biased region" description="Polar residues" evidence="5">
    <location>
        <begin position="1918"/>
        <end position="1962"/>
    </location>
</feature>
<feature type="compositionally biased region" description="Low complexity" evidence="5">
    <location>
        <begin position="1963"/>
        <end position="1983"/>
    </location>
</feature>
<feature type="compositionally biased region" description="Polar residues" evidence="5">
    <location>
        <begin position="2052"/>
        <end position="2070"/>
    </location>
</feature>
<feature type="compositionally biased region" description="Low complexity" evidence="5">
    <location>
        <begin position="2090"/>
        <end position="2102"/>
    </location>
</feature>
<feature type="compositionally biased region" description="Polar residues" evidence="5">
    <location>
        <begin position="2107"/>
        <end position="2120"/>
    </location>
</feature>
<feature type="compositionally biased region" description="Low complexity" evidence="5">
    <location>
        <begin position="2121"/>
        <end position="2196"/>
    </location>
</feature>
<feature type="compositionally biased region" description="Polar residues" evidence="5">
    <location>
        <begin position="2240"/>
        <end position="2264"/>
    </location>
</feature>
<feature type="compositionally biased region" description="Low complexity" evidence="5">
    <location>
        <begin position="2265"/>
        <end position="2278"/>
    </location>
</feature>
<feature type="compositionally biased region" description="Polar residues" evidence="5">
    <location>
        <begin position="2323"/>
        <end position="2347"/>
    </location>
</feature>
<feature type="glycosylation site" description="N-linked (GlcNAc...) asparagine" evidence="2">
    <location>
        <position position="268"/>
    </location>
</feature>
<feature type="glycosylation site" description="N-linked (GlcNAc...) asparagine" evidence="2">
    <location>
        <position position="486"/>
    </location>
</feature>
<feature type="glycosylation site" description="N-linked (GlcNAc...) asparagine" evidence="2">
    <location>
        <position position="659"/>
    </location>
</feature>
<feature type="glycosylation site" description="N-linked (GlcNAc...) asparagine" evidence="2">
    <location>
        <position position="975"/>
    </location>
</feature>
<feature type="glycosylation site" description="N-linked (GlcNAc...) asparagine" evidence="2">
    <location>
        <position position="1179"/>
    </location>
</feature>
<feature type="disulfide bond" evidence="4">
    <location>
        <begin position="45"/>
        <end position="176"/>
    </location>
</feature>
<feature type="disulfide bond" evidence="4">
    <location>
        <begin position="67"/>
        <end position="213"/>
    </location>
</feature>
<feature type="disulfide bond" evidence="4">
    <location>
        <begin position="397"/>
        <end position="533"/>
    </location>
</feature>
<feature type="disulfide bond" evidence="4">
    <location>
        <begin position="419"/>
        <end position="578"/>
    </location>
</feature>
<feature type="disulfide bond" evidence="4">
    <location>
        <begin position="868"/>
        <end position="1002"/>
    </location>
</feature>
<feature type="disulfide bond" evidence="4">
    <location>
        <begin position="890"/>
        <end position="1037"/>
    </location>
</feature>
<feature type="disulfide bond" evidence="4">
    <location>
        <begin position="899"/>
        <end position="999"/>
    </location>
</feature>
<feature type="disulfide bond" evidence="4">
    <location>
        <begin position="917"/>
        <end position="924"/>
    </location>
</feature>
<feature type="disulfide bond" evidence="1">
    <location>
        <begin position="2349"/>
        <end position="2396"/>
    </location>
</feature>
<feature type="disulfide bond" evidence="1">
    <location>
        <begin position="2363"/>
        <end position="2410"/>
    </location>
</feature>
<feature type="disulfide bond" evidence="1">
    <location>
        <begin position="2372"/>
        <end position="2430"/>
    </location>
</feature>
<feature type="disulfide bond" evidence="1">
    <location>
        <begin position="2376"/>
        <end position="2432"/>
    </location>
</feature>
<feature type="disulfide bond" evidence="1">
    <location>
        <begin status="unknown"/>
        <end position="2437"/>
    </location>
</feature>
<feature type="sequence variant" id="VAR_059542" description="In dbSNP:rs10736904.">
    <original>P</original>
    <variation>S</variation>
    <location>
        <position position="1578"/>
    </location>
</feature>
<feature type="sequence variant" id="VAR_061488" description="In dbSNP:rs35549382." evidence="11">
    <original>P</original>
    <variation>T</variation>
    <location>
        <position position="1794"/>
    </location>
</feature>
<feature type="sequence conflict" description="In Ref. 2; AAQ82434." evidence="14" ref="2">
    <original>T</original>
    <variation>S</variation>
    <location>
        <position position="81"/>
    </location>
</feature>
<feature type="sequence conflict" description="In Ref. 2; AAQ82434." evidence="14" ref="2">
    <original>I</original>
    <variation>G</variation>
    <location>
        <position position="231"/>
    </location>
</feature>
<feature type="sequence conflict" description="In Ref. 2; AAQ82434." evidence="14" ref="2">
    <original>C</original>
    <variation>Y</variation>
    <location>
        <position position="271"/>
    </location>
</feature>
<feature type="sequence conflict" description="In Ref. 2; AAQ82434." evidence="14" ref="2">
    <original>RRW</original>
    <variation>AL</variation>
    <location>
        <begin position="289"/>
        <end position="291"/>
    </location>
</feature>
<feature type="sequence conflict" description="In Ref. 2; AAQ82434." evidence="14" ref="2">
    <original>PQ</original>
    <variation>SE</variation>
    <location>
        <begin position="322"/>
        <end position="323"/>
    </location>
</feature>
<feature type="sequence conflict" description="In Ref. 2; AAQ82434." evidence="14" ref="2">
    <original>V</original>
    <variation>D</variation>
    <location>
        <position position="341"/>
    </location>
</feature>
<feature type="sequence conflict" description="In Ref. 2; AAQ82434." evidence="14" ref="2">
    <original>A</original>
    <variation>D</variation>
    <location>
        <position position="569"/>
    </location>
</feature>
<feature type="sequence conflict" description="In Ref. 2; AAQ82434." evidence="14" ref="2">
    <original>F</original>
    <variation>I</variation>
    <location>
        <position position="614"/>
    </location>
</feature>
<feature type="sequence conflict" description="In Ref. 2; AAQ82434." evidence="14" ref="2">
    <original>V</original>
    <variation>M</variation>
    <location>
        <position position="619"/>
    </location>
</feature>
<feature type="sequence conflict" description="In Ref. 2; AAQ82434." evidence="14" ref="2">
    <original>P</original>
    <variation>L</variation>
    <location>
        <position position="757"/>
    </location>
</feature>
<feature type="sequence conflict" description="In Ref. 2; AAQ82434." evidence="14" ref="2">
    <original>D</original>
    <variation>Y</variation>
    <location>
        <position position="818"/>
    </location>
</feature>
<feature type="sequence conflict" description="In Ref. 2; AAQ82434." evidence="14" ref="2">
    <original>D</original>
    <variation>Y</variation>
    <location>
        <position position="903"/>
    </location>
</feature>
<feature type="sequence conflict" description="In Ref. 2; AAQ82434." evidence="14" ref="2">
    <original>T</original>
    <variation>S</variation>
    <location>
        <position position="1472"/>
    </location>
</feature>
<feature type="sequence conflict" description="In Ref. 2; AAQ82434." evidence="14" ref="2">
    <original>T</original>
    <variation>S</variation>
    <location>
        <position position="1544"/>
    </location>
</feature>
<feature type="sequence conflict" description="In Ref. 2; AAQ82434." evidence="14" ref="2">
    <original>V</original>
    <variation>M</variation>
    <location>
        <position position="1558"/>
    </location>
</feature>
<feature type="sequence conflict" description="In Ref. 5; AAA35866." evidence="14" ref="5">
    <original>TT</original>
    <variation>SS</variation>
    <location>
        <begin position="1806"/>
        <end position="1807"/>
    </location>
</feature>
<feature type="sequence conflict" description="In Ref. 5; AAA35866." evidence="14" ref="5">
    <original>V</original>
    <variation>M</variation>
    <location>
        <position position="1815"/>
    </location>
</feature>
<feature type="sequence conflict" description="In Ref. 5; AAA35866." evidence="14" ref="5">
    <original>H</original>
    <variation>E</variation>
    <location>
        <position position="1833"/>
    </location>
</feature>
<feature type="sequence conflict" description="In Ref. 5; AAA35866." evidence="14" ref="5">
    <original>S</original>
    <variation>P</variation>
    <location>
        <position position="1842"/>
    </location>
</feature>
<feature type="sequence conflict" description="In Ref. 5; AAA35866." evidence="14" ref="5">
    <original>I</original>
    <variation>T</variation>
    <location>
        <position position="1857"/>
    </location>
</feature>
<feature type="sequence conflict" description="In Ref. 5; AAA35866." evidence="14" ref="5">
    <original>T</original>
    <variation>A</variation>
    <location>
        <position position="1861"/>
    </location>
</feature>
<feature type="sequence conflict" description="In Ref. 5; AAA35866." evidence="14" ref="5">
    <original>M</original>
    <variation>T</variation>
    <location>
        <position position="1872"/>
    </location>
</feature>
<feature type="sequence conflict" description="In Ref. 5; AAA35866." evidence="14" ref="5">
    <original>PTTIKA</original>
    <variation>LTTLMN</variation>
    <location>
        <begin position="1880"/>
        <end position="1885"/>
    </location>
</feature>
<feature type="sequence conflict" description="In Ref. 5; AAA35866." evidence="14" ref="5">
    <original>M</original>
    <variation>V</variation>
    <location>
        <position position="1895"/>
    </location>
</feature>
<feature type="sequence conflict" description="In Ref. 5; AAA35866." evidence="14" ref="5">
    <original>SP</original>
    <variation>AA</variation>
    <location>
        <begin position="1905"/>
        <end position="1906"/>
    </location>
</feature>
<feature type="sequence conflict" description="In Ref. 5; AAA35866." evidence="14" ref="5">
    <original>PY</original>
    <variation>HS</variation>
    <location>
        <begin position="1919"/>
        <end position="1920"/>
    </location>
</feature>
<feature type="sequence conflict" description="In Ref. 5; AAA35866." evidence="14" ref="5">
    <original>S</original>
    <variation>A</variation>
    <location>
        <position position="1934"/>
    </location>
</feature>
<feature type="sequence conflict" description="In Ref. 5; AAA35866." evidence="14" ref="5">
    <original>NITPKHTSTGTRTPV</original>
    <variation>KITTNPTSIGSSTPM</variation>
    <location>
        <begin position="1937"/>
        <end position="1951"/>
    </location>
</feature>
<feature type="sequence conflict" description="In Ref. 6; BAC04860." evidence="14" ref="6">
    <original>P</original>
    <variation>F</variation>
    <location>
        <position position="1940"/>
    </location>
</feature>
<feature type="sequence conflict" description="In Ref. 5; AAA35866." evidence="14" ref="5">
    <original>S</original>
    <variation>T</variation>
    <location>
        <position position="1958"/>
    </location>
</feature>
<feature type="sequence conflict" description="In Ref. 5; AAA35866." evidence="14" ref="5">
    <original>P</original>
    <variation>T</variation>
    <location>
        <position position="1963"/>
    </location>
</feature>
<feature type="sequence conflict" description="In Ref. 5; AAA35866." evidence="14" ref="5">
    <original>P</original>
    <variation>S</variation>
    <location>
        <position position="1972"/>
    </location>
</feature>
<feature type="sequence conflict" description="In Ref. 8; AAC51370." evidence="14" ref="8">
    <original>S</original>
    <variation>SSWS</variation>
    <location>
        <position position="2091"/>
    </location>
</feature>
<feature type="sequence conflict" description="In Ref. 6; BAC04860." evidence="14" ref="6">
    <original>S</original>
    <variation>F</variation>
    <location>
        <position position="2129"/>
    </location>
</feature>
<feature type="sequence conflict" description="In Ref. 8; AAC51370." evidence="14" ref="8">
    <original>ASV</original>
    <variation>GSG</variation>
    <location>
        <begin position="2190"/>
        <end position="2192"/>
    </location>
</feature>
<feature type="sequence conflict" description="In Ref. 8; AAC51370." evidence="14" ref="8">
    <original>R</original>
    <variation>G</variation>
    <location>
        <position position="2272"/>
    </location>
</feature>
<feature type="sequence conflict" description="In Ref. 8; AAC51370." evidence="14" ref="8">
    <original>F</original>
    <variation>S</variation>
    <location>
        <position position="2318"/>
    </location>
</feature>
<comment type="function">
    <text evidence="6 7 8">May provide a mechanism for modulation of the composition of the protective mucus layer related to acid secretion or the presence of bacteria and noxious agents in the lumen. Plays an important role in the cytoprotection of epithelial surfaces and are used as tumor markers in a variety of cancers. May play a role in epithelial organogenesis.</text>
</comment>
<comment type="subunit">
    <text evidence="12">Multimer; disulfide-linked.</text>
</comment>
<comment type="subcellular location">
    <subcellularLocation>
        <location>Secreted</location>
    </subcellularLocation>
</comment>
<comment type="tissue specificity">
    <text evidence="6 7 8 9 13">Expressed in the regenerative zone of gastric antrum, gastric body mucosa and gastric incisura mucosa. Expressed in the deeper mucous glands of gastric antrum. Overexpressed in Helicobacter pylori infected gastric epithelium. Highly expressed in duodenal Brunner's glands, gall bladder, seminal vesicle, pancreatic centroacinar cells and ducts, and periductal glands of the common bile duct.</text>
</comment>
<comment type="developmental stage">
    <text evidence="6 7">Early expressed in fetal development and was observed in Brunner's glands and pancreatic ducts at 18-19 weeks and in gastric glands at 20 weeks of gestation. Expressed transiently in the nephrogenic zone of the kidney in the early mid-trimester of development. Detected in the epithelium of ureteric buds at 13 weeks and at lower levels from 17 to 23 weeks of gestation.</text>
</comment>
<comment type="induction">
    <text evidence="10">Up-regulated by NFKB1. Repressed by mithramycin A which is an inhibitor of binding of transcription factors.</text>
</comment>
<comment type="PTM">
    <text evidence="8">O-glycosylated.</text>
</comment>
<comment type="polymorphism">
    <text>The number of repeats is highly polymorphic and varies among different alleles. These repeats are very similar but not identical.</text>
</comment>
<comment type="sequence caution" evidence="14">
    <conflict type="erroneous termination">
        <sequence resource="EMBL" id="AK092533"/>
    </conflict>
    <text>Truncated C-terminus.</text>
</comment>
<comment type="sequence caution" evidence="14">
    <conflict type="erroneous initiation">
        <sequence resource="EMBL-CDS" id="BAC04860"/>
    </conflict>
    <text>Truncated N-terminus.</text>
</comment>
<comment type="online information" name="Mucin database">
    <link uri="http://www.medkem.gu.se/mucinbiology/databases/"/>
</comment>
<comment type="online information" name="Atlas of Genetics and Cytogenetics in Oncology and Haematology">
    <link uri="https://atlasgeneticsoncology.org/gene/44115/MUC6"/>
</comment>
<proteinExistence type="evidence at protein level"/>
<keyword id="KW-1015">Disulfide bond</keyword>
<keyword id="KW-0325">Glycoprotein</keyword>
<keyword id="KW-1267">Proteomics identification</keyword>
<keyword id="KW-1185">Reference proteome</keyword>
<keyword id="KW-0677">Repeat</keyword>
<keyword id="KW-0964">Secreted</keyword>
<keyword id="KW-0732">Signal</keyword>